<gene>
    <name evidence="7" type="primary">dpp-H4</name>
</gene>
<feature type="signal peptide" evidence="2">
    <location>
        <begin position="1"/>
        <end position="22"/>
    </location>
</feature>
<feature type="propeptide" id="PRO_0000248612" evidence="2 4">
    <location>
        <begin position="23"/>
        <end position="43"/>
    </location>
</feature>
<feature type="peptide" id="PRO_0000248613" description="Dermaseptin-H4" evidence="4">
    <location>
        <begin position="46"/>
        <end position="70"/>
    </location>
</feature>
<feature type="propeptide" id="PRO_0000248614" evidence="4">
    <location>
        <begin position="72"/>
        <end position="73"/>
    </location>
</feature>
<feature type="region of interest" description="Disordered" evidence="3">
    <location>
        <begin position="25"/>
        <end position="45"/>
    </location>
</feature>
<feature type="compositionally biased region" description="Acidic residues" evidence="3">
    <location>
        <begin position="30"/>
        <end position="40"/>
    </location>
</feature>
<feature type="modified residue" description="Leucine amide" evidence="4">
    <location>
        <position position="70"/>
    </location>
</feature>
<comment type="function">
    <text evidence="1 4">Has antibacterial activity against the Gram-negative bacteria E.coli ATCC 11775 (MIC=0.8 uM), and the Gram-positive bacteria S.aureus ATCC 12600 (MIC=0.4 uM) and M.luteus ATCC 49732 (MIC=0.8 uM). Does not inhibit the growth of the fungus C.albicans. Probably acts by disturbing membrane functions with its amphipathic structure.</text>
</comment>
<comment type="subcellular location">
    <subcellularLocation>
        <location evidence="4">Secreted</location>
    </subcellularLocation>
</comment>
<comment type="tissue specificity">
    <text evidence="4">Expressed by the skin glands.</text>
</comment>
<comment type="mass spectrometry"/>
<comment type="similarity">
    <text evidence="2">Belongs to the frog skin active peptide (FSAP) family. Dermaseptin subfamily.</text>
</comment>
<evidence type="ECO:0000250" key="1">
    <source>
        <dbReference type="UniProtKB" id="P81486"/>
    </source>
</evidence>
<evidence type="ECO:0000255" key="2"/>
<evidence type="ECO:0000256" key="3">
    <source>
        <dbReference type="SAM" id="MobiDB-lite"/>
    </source>
</evidence>
<evidence type="ECO:0000269" key="4">
    <source>
    </source>
</evidence>
<evidence type="ECO:0000303" key="5">
    <source>
    </source>
</evidence>
<evidence type="ECO:0000305" key="6"/>
<evidence type="ECO:0000312" key="7">
    <source>
        <dbReference type="EMBL" id="CAK50802.1"/>
    </source>
</evidence>
<dbReference type="EMBL" id="AM268432">
    <property type="protein sequence ID" value="CAK50802.1"/>
    <property type="molecule type" value="mRNA"/>
</dbReference>
<dbReference type="GO" id="GO:0005576">
    <property type="term" value="C:extracellular region"/>
    <property type="evidence" value="ECO:0007669"/>
    <property type="project" value="UniProtKB-SubCell"/>
</dbReference>
<dbReference type="GO" id="GO:0042742">
    <property type="term" value="P:defense response to bacterium"/>
    <property type="evidence" value="ECO:0007669"/>
    <property type="project" value="UniProtKB-KW"/>
</dbReference>
<dbReference type="InterPro" id="IPR022731">
    <property type="entry name" value="Dermaseptin_dom"/>
</dbReference>
<dbReference type="InterPro" id="IPR004275">
    <property type="entry name" value="Frog_antimicrobial_propeptide"/>
</dbReference>
<dbReference type="InterPro" id="IPR016322">
    <property type="entry name" value="FSAP"/>
</dbReference>
<dbReference type="Pfam" id="PF12121">
    <property type="entry name" value="DD_K"/>
    <property type="match status" value="1"/>
</dbReference>
<dbReference type="Pfam" id="PF03032">
    <property type="entry name" value="FSAP_sig_propep"/>
    <property type="match status" value="1"/>
</dbReference>
<dbReference type="PIRSF" id="PIRSF001822">
    <property type="entry name" value="Dermaseptin_precursor"/>
    <property type="match status" value="1"/>
</dbReference>
<keyword id="KW-0027">Amidation</keyword>
<keyword id="KW-0878">Amphibian defense peptide</keyword>
<keyword id="KW-0044">Antibiotic</keyword>
<keyword id="KW-0929">Antimicrobial</keyword>
<keyword id="KW-0165">Cleavage on pair of basic residues</keyword>
<keyword id="KW-0903">Direct protein sequencing</keyword>
<keyword id="KW-0964">Secreted</keyword>
<keyword id="KW-0732">Signal</keyword>
<accession>Q1EJP5</accession>
<reference evidence="6 7" key="1">
    <citation type="journal article" date="2007" name="Peptides">
        <title>A combined mass spectrometric and cDNA sequencing approach to the isolation and characterization of novel antimicrobial peptides from the skin secretions of Phyllomedusa hypochondrialis azurea.</title>
        <authorList>
            <person name="Thompson A.H."/>
            <person name="Bjourson A.J."/>
            <person name="Orr D.F."/>
            <person name="Shaw C."/>
            <person name="McClean S."/>
        </authorList>
    </citation>
    <scope>NUCLEOTIDE SEQUENCE [MRNA]</scope>
    <scope>PROTEIN SEQUENCE OF 46-70</scope>
    <scope>FUNCTION</scope>
    <scope>SUBCELLULAR LOCATION</scope>
    <scope>TISSUE SPECIFICITY</scope>
    <scope>MASS SPECTROMETRY</scope>
    <scope>AMIDATION AT LEU-70</scope>
    <source>
        <tissue>Skin</tissue>
        <tissue evidence="4">Skin secretion</tissue>
    </source>
</reference>
<sequence>MAFMKKSLFLVLFLGMVSLSICEEEKRENEDEAKQEDDEQSEMKRGLWSTIKNVGKEAAIAAGKAALGALGEQ</sequence>
<protein>
    <recommendedName>
        <fullName evidence="5">Dermaseptin-H4</fullName>
    </recommendedName>
    <alternativeName>
        <fullName evidence="5">Dermaseptin-like peptide 4</fullName>
        <shortName evidence="5">DMS4</shortName>
    </alternativeName>
</protein>
<name>DMS4_PITAZ</name>
<organism>
    <name type="scientific">Pithecopus azureus</name>
    <name type="common">Orange-legged monkey tree frog</name>
    <name type="synonym">Phyllomedusa azurea</name>
    <dbReference type="NCBI Taxonomy" id="2034991"/>
    <lineage>
        <taxon>Eukaryota</taxon>
        <taxon>Metazoa</taxon>
        <taxon>Chordata</taxon>
        <taxon>Craniata</taxon>
        <taxon>Vertebrata</taxon>
        <taxon>Euteleostomi</taxon>
        <taxon>Amphibia</taxon>
        <taxon>Batrachia</taxon>
        <taxon>Anura</taxon>
        <taxon>Neobatrachia</taxon>
        <taxon>Hyloidea</taxon>
        <taxon>Hylidae</taxon>
        <taxon>Phyllomedusinae</taxon>
        <taxon>Pithecopus</taxon>
    </lineage>
</organism>
<proteinExistence type="evidence at protein level"/>